<gene>
    <name evidence="1" type="primary">ispE</name>
    <name type="ordered locus">BU170</name>
</gene>
<reference key="1">
    <citation type="journal article" date="2000" name="Nature">
        <title>Genome sequence of the endocellular bacterial symbiont of aphids Buchnera sp. APS.</title>
        <authorList>
            <person name="Shigenobu S."/>
            <person name="Watanabe H."/>
            <person name="Hattori M."/>
            <person name="Sakaki Y."/>
            <person name="Ishikawa H."/>
        </authorList>
    </citation>
    <scope>NUCLEOTIDE SEQUENCE [LARGE SCALE GENOMIC DNA]</scope>
    <source>
        <strain>APS</strain>
    </source>
</reference>
<comment type="function">
    <text evidence="1">Catalyzes the phosphorylation of the position 2 hydroxy group of 4-diphosphocytidyl-2C-methyl-D-erythritol.</text>
</comment>
<comment type="catalytic activity">
    <reaction evidence="1">
        <text>4-CDP-2-C-methyl-D-erythritol + ATP = 4-CDP-2-C-methyl-D-erythritol 2-phosphate + ADP + H(+)</text>
        <dbReference type="Rhea" id="RHEA:18437"/>
        <dbReference type="ChEBI" id="CHEBI:15378"/>
        <dbReference type="ChEBI" id="CHEBI:30616"/>
        <dbReference type="ChEBI" id="CHEBI:57823"/>
        <dbReference type="ChEBI" id="CHEBI:57919"/>
        <dbReference type="ChEBI" id="CHEBI:456216"/>
        <dbReference type="EC" id="2.7.1.148"/>
    </reaction>
</comment>
<comment type="pathway">
    <text evidence="1">Isoprenoid biosynthesis; isopentenyl diphosphate biosynthesis via DXP pathway; isopentenyl diphosphate from 1-deoxy-D-xylulose 5-phosphate: step 3/6.</text>
</comment>
<comment type="subunit">
    <text evidence="1">Homodimer.</text>
</comment>
<comment type="similarity">
    <text evidence="1">Belongs to the GHMP kinase family. IspE subfamily.</text>
</comment>
<comment type="sequence caution" evidence="2">
    <conflict type="erroneous initiation">
        <sequence resource="EMBL-CDS" id="BAB12887"/>
    </conflict>
</comment>
<evidence type="ECO:0000255" key="1">
    <source>
        <dbReference type="HAMAP-Rule" id="MF_00061"/>
    </source>
</evidence>
<evidence type="ECO:0000305" key="2"/>
<organism>
    <name type="scientific">Buchnera aphidicola subsp. Acyrthosiphon pisum (strain APS)</name>
    <name type="common">Acyrthosiphon pisum symbiotic bacterium</name>
    <dbReference type="NCBI Taxonomy" id="107806"/>
    <lineage>
        <taxon>Bacteria</taxon>
        <taxon>Pseudomonadati</taxon>
        <taxon>Pseudomonadota</taxon>
        <taxon>Gammaproteobacteria</taxon>
        <taxon>Enterobacterales</taxon>
        <taxon>Erwiniaceae</taxon>
        <taxon>Buchnera</taxon>
    </lineage>
</organism>
<feature type="chain" id="PRO_0000189197" description="4-diphosphocytidyl-2-C-methyl-D-erythritol kinase">
    <location>
        <begin position="1"/>
        <end position="286"/>
    </location>
</feature>
<feature type="active site" evidence="1">
    <location>
        <position position="10"/>
    </location>
</feature>
<feature type="active site" evidence="1">
    <location>
        <position position="142"/>
    </location>
</feature>
<feature type="binding site" evidence="1">
    <location>
        <begin position="100"/>
        <end position="110"/>
    </location>
    <ligand>
        <name>ATP</name>
        <dbReference type="ChEBI" id="CHEBI:30616"/>
    </ligand>
</feature>
<proteinExistence type="inferred from homology"/>
<sequence length="286" mass="32040">MIYTCLSPAKINLFLYVTGRRKDGYHNIQTLFQFLDYGDQFKIIANKTGNIELFTEKKIFMNVQNSIIIAAKLLKKTALLQGKLQNSSYGAKIFLKKNIPMGSGLGGGSSNAATTLVVLNKLWNTQYTLKELSLLGLRIGADVPGFVMGNTAVIEGIGDILYPIVQKEKWYLVVYPCINISTRYMFSSPFLMSNTAKKSLQVLLKTPFKNDFENIAKKQFVPIKKLIRMLSSYAPSRMTGTGSCVFSEFDNKKSAQKIFSVLPKNVQGFIAKSVNISPLHKTLYKR</sequence>
<name>ISPE_BUCAI</name>
<protein>
    <recommendedName>
        <fullName evidence="1">4-diphosphocytidyl-2-C-methyl-D-erythritol kinase</fullName>
        <shortName evidence="1">CMK</shortName>
        <ecNumber evidence="1">2.7.1.148</ecNumber>
    </recommendedName>
    <alternativeName>
        <fullName evidence="1">4-(cytidine-5'-diphospho)-2-C-methyl-D-erythritol kinase</fullName>
    </alternativeName>
</protein>
<dbReference type="EC" id="2.7.1.148" evidence="1"/>
<dbReference type="EMBL" id="BA000003">
    <property type="protein sequence ID" value="BAB12887.1"/>
    <property type="status" value="ALT_INIT"/>
    <property type="molecule type" value="Genomic_DNA"/>
</dbReference>
<dbReference type="RefSeq" id="NP_240001.1">
    <property type="nucleotide sequence ID" value="NC_002528.1"/>
</dbReference>
<dbReference type="SMR" id="P57267"/>
<dbReference type="STRING" id="563178.BUAP5A_167"/>
<dbReference type="EnsemblBacteria" id="BAB12887">
    <property type="protein sequence ID" value="BAB12887"/>
    <property type="gene ID" value="BAB12887"/>
</dbReference>
<dbReference type="KEGG" id="buc:BU170"/>
<dbReference type="PATRIC" id="fig|107806.10.peg.181"/>
<dbReference type="eggNOG" id="COG1947">
    <property type="taxonomic scope" value="Bacteria"/>
</dbReference>
<dbReference type="HOGENOM" id="CLU_053057_3_0_6"/>
<dbReference type="UniPathway" id="UPA00056">
    <property type="reaction ID" value="UER00094"/>
</dbReference>
<dbReference type="Proteomes" id="UP000001806">
    <property type="component" value="Chromosome"/>
</dbReference>
<dbReference type="GO" id="GO:0050515">
    <property type="term" value="F:4-(cytidine 5'-diphospho)-2-C-methyl-D-erythritol kinase activity"/>
    <property type="evidence" value="ECO:0007669"/>
    <property type="project" value="UniProtKB-UniRule"/>
</dbReference>
<dbReference type="GO" id="GO:0005524">
    <property type="term" value="F:ATP binding"/>
    <property type="evidence" value="ECO:0007669"/>
    <property type="project" value="UniProtKB-UniRule"/>
</dbReference>
<dbReference type="GO" id="GO:0019288">
    <property type="term" value="P:isopentenyl diphosphate biosynthetic process, methylerythritol 4-phosphate pathway"/>
    <property type="evidence" value="ECO:0007669"/>
    <property type="project" value="UniProtKB-UniRule"/>
</dbReference>
<dbReference type="GO" id="GO:0016114">
    <property type="term" value="P:terpenoid biosynthetic process"/>
    <property type="evidence" value="ECO:0007669"/>
    <property type="project" value="InterPro"/>
</dbReference>
<dbReference type="Gene3D" id="3.30.230.10">
    <property type="match status" value="1"/>
</dbReference>
<dbReference type="Gene3D" id="3.30.70.890">
    <property type="entry name" value="GHMP kinase, C-terminal domain"/>
    <property type="match status" value="1"/>
</dbReference>
<dbReference type="HAMAP" id="MF_00061">
    <property type="entry name" value="IspE"/>
    <property type="match status" value="1"/>
</dbReference>
<dbReference type="InterPro" id="IPR013750">
    <property type="entry name" value="GHMP_kinase_C_dom"/>
</dbReference>
<dbReference type="InterPro" id="IPR036554">
    <property type="entry name" value="GHMP_kinase_C_sf"/>
</dbReference>
<dbReference type="InterPro" id="IPR006204">
    <property type="entry name" value="GHMP_kinase_N_dom"/>
</dbReference>
<dbReference type="InterPro" id="IPR004424">
    <property type="entry name" value="IspE"/>
</dbReference>
<dbReference type="InterPro" id="IPR020568">
    <property type="entry name" value="Ribosomal_Su5_D2-typ_SF"/>
</dbReference>
<dbReference type="InterPro" id="IPR014721">
    <property type="entry name" value="Ribsml_uS5_D2-typ_fold_subgr"/>
</dbReference>
<dbReference type="NCBIfam" id="TIGR00154">
    <property type="entry name" value="ispE"/>
    <property type="match status" value="1"/>
</dbReference>
<dbReference type="PANTHER" id="PTHR43527">
    <property type="entry name" value="4-DIPHOSPHOCYTIDYL-2-C-METHYL-D-ERYTHRITOL KINASE, CHLOROPLASTIC"/>
    <property type="match status" value="1"/>
</dbReference>
<dbReference type="PANTHER" id="PTHR43527:SF2">
    <property type="entry name" value="4-DIPHOSPHOCYTIDYL-2-C-METHYL-D-ERYTHRITOL KINASE, CHLOROPLASTIC"/>
    <property type="match status" value="1"/>
</dbReference>
<dbReference type="Pfam" id="PF08544">
    <property type="entry name" value="GHMP_kinases_C"/>
    <property type="match status" value="1"/>
</dbReference>
<dbReference type="Pfam" id="PF00288">
    <property type="entry name" value="GHMP_kinases_N"/>
    <property type="match status" value="1"/>
</dbReference>
<dbReference type="PIRSF" id="PIRSF010376">
    <property type="entry name" value="IspE"/>
    <property type="match status" value="1"/>
</dbReference>
<dbReference type="SUPFAM" id="SSF55060">
    <property type="entry name" value="GHMP Kinase, C-terminal domain"/>
    <property type="match status" value="1"/>
</dbReference>
<dbReference type="SUPFAM" id="SSF54211">
    <property type="entry name" value="Ribosomal protein S5 domain 2-like"/>
    <property type="match status" value="1"/>
</dbReference>
<keyword id="KW-0067">ATP-binding</keyword>
<keyword id="KW-0414">Isoprene biosynthesis</keyword>
<keyword id="KW-0418">Kinase</keyword>
<keyword id="KW-0547">Nucleotide-binding</keyword>
<keyword id="KW-1185">Reference proteome</keyword>
<keyword id="KW-0808">Transferase</keyword>
<accession>P57267</accession>